<evidence type="ECO:0000255" key="1">
    <source>
        <dbReference type="HAMAP-Rule" id="MF_01530"/>
    </source>
</evidence>
<dbReference type="EMBL" id="CU928158">
    <property type="protein sequence ID" value="CAQ91440.1"/>
    <property type="molecule type" value="Genomic_DNA"/>
</dbReference>
<dbReference type="RefSeq" id="WP_000085992.1">
    <property type="nucleotide sequence ID" value="NC_011740.1"/>
</dbReference>
<dbReference type="SMR" id="B7LK52"/>
<dbReference type="GeneID" id="75059601"/>
<dbReference type="KEGG" id="efe:EFER_4006"/>
<dbReference type="HOGENOM" id="CLU_001265_47_1_6"/>
<dbReference type="OrthoDB" id="9814303at2"/>
<dbReference type="Proteomes" id="UP000000745">
    <property type="component" value="Chromosome"/>
</dbReference>
<dbReference type="GO" id="GO:0005886">
    <property type="term" value="C:plasma membrane"/>
    <property type="evidence" value="ECO:0007669"/>
    <property type="project" value="UniProtKB-SubCell"/>
</dbReference>
<dbReference type="GO" id="GO:0022857">
    <property type="term" value="F:transmembrane transporter activity"/>
    <property type="evidence" value="ECO:0007669"/>
    <property type="project" value="UniProtKB-UniRule"/>
</dbReference>
<dbReference type="GO" id="GO:0046677">
    <property type="term" value="P:response to antibiotic"/>
    <property type="evidence" value="ECO:0007669"/>
    <property type="project" value="UniProtKB-KW"/>
</dbReference>
<dbReference type="CDD" id="cd17320">
    <property type="entry name" value="MFS_MdfA_MDR_like"/>
    <property type="match status" value="1"/>
</dbReference>
<dbReference type="FunFam" id="1.20.1720.10:FF:000003">
    <property type="entry name" value="Multidrug resistance protein MdtL"/>
    <property type="match status" value="1"/>
</dbReference>
<dbReference type="Gene3D" id="1.20.1720.10">
    <property type="entry name" value="Multidrug resistance protein D"/>
    <property type="match status" value="1"/>
</dbReference>
<dbReference type="HAMAP" id="MF_01530">
    <property type="entry name" value="MFS_MdtL"/>
    <property type="match status" value="1"/>
</dbReference>
<dbReference type="InterPro" id="IPR011701">
    <property type="entry name" value="MFS"/>
</dbReference>
<dbReference type="InterPro" id="IPR020846">
    <property type="entry name" value="MFS_dom"/>
</dbReference>
<dbReference type="InterPro" id="IPR050189">
    <property type="entry name" value="MFS_Efflux_Transporters"/>
</dbReference>
<dbReference type="InterPro" id="IPR036259">
    <property type="entry name" value="MFS_trans_sf"/>
</dbReference>
<dbReference type="InterPro" id="IPR023697">
    <property type="entry name" value="Multidrug-R_MdtL"/>
</dbReference>
<dbReference type="NCBIfam" id="NF007782">
    <property type="entry name" value="PRK10473.1"/>
    <property type="match status" value="1"/>
</dbReference>
<dbReference type="PANTHER" id="PTHR43124:SF3">
    <property type="entry name" value="CHLORAMPHENICOL EFFLUX PUMP RV0191"/>
    <property type="match status" value="1"/>
</dbReference>
<dbReference type="PANTHER" id="PTHR43124">
    <property type="entry name" value="PURINE EFFLUX PUMP PBUE"/>
    <property type="match status" value="1"/>
</dbReference>
<dbReference type="Pfam" id="PF07690">
    <property type="entry name" value="MFS_1"/>
    <property type="match status" value="1"/>
</dbReference>
<dbReference type="SUPFAM" id="SSF103473">
    <property type="entry name" value="MFS general substrate transporter"/>
    <property type="match status" value="1"/>
</dbReference>
<dbReference type="PROSITE" id="PS50850">
    <property type="entry name" value="MFS"/>
    <property type="match status" value="1"/>
</dbReference>
<reference key="1">
    <citation type="journal article" date="2009" name="PLoS Genet.">
        <title>Organised genome dynamics in the Escherichia coli species results in highly diverse adaptive paths.</title>
        <authorList>
            <person name="Touchon M."/>
            <person name="Hoede C."/>
            <person name="Tenaillon O."/>
            <person name="Barbe V."/>
            <person name="Baeriswyl S."/>
            <person name="Bidet P."/>
            <person name="Bingen E."/>
            <person name="Bonacorsi S."/>
            <person name="Bouchier C."/>
            <person name="Bouvet O."/>
            <person name="Calteau A."/>
            <person name="Chiapello H."/>
            <person name="Clermont O."/>
            <person name="Cruveiller S."/>
            <person name="Danchin A."/>
            <person name="Diard M."/>
            <person name="Dossat C."/>
            <person name="Karoui M.E."/>
            <person name="Frapy E."/>
            <person name="Garry L."/>
            <person name="Ghigo J.M."/>
            <person name="Gilles A.M."/>
            <person name="Johnson J."/>
            <person name="Le Bouguenec C."/>
            <person name="Lescat M."/>
            <person name="Mangenot S."/>
            <person name="Martinez-Jehanne V."/>
            <person name="Matic I."/>
            <person name="Nassif X."/>
            <person name="Oztas S."/>
            <person name="Petit M.A."/>
            <person name="Pichon C."/>
            <person name="Rouy Z."/>
            <person name="Ruf C.S."/>
            <person name="Schneider D."/>
            <person name="Tourret J."/>
            <person name="Vacherie B."/>
            <person name="Vallenet D."/>
            <person name="Medigue C."/>
            <person name="Rocha E.P.C."/>
            <person name="Denamur E."/>
        </authorList>
    </citation>
    <scope>NUCLEOTIDE SEQUENCE [LARGE SCALE GENOMIC DNA]</scope>
    <source>
        <strain>ATCC 35469 / DSM 13698 / BCRC 15582 / CCUG 18766 / IAM 14443 / JCM 21226 / LMG 7866 / NBRC 102419 / NCTC 12128 / CDC 0568-73</strain>
    </source>
</reference>
<organism>
    <name type="scientific">Escherichia fergusonii (strain ATCC 35469 / DSM 13698 / CCUG 18766 / IAM 14443 / JCM 21226 / LMG 7866 / NBRC 102419 / NCTC 12128 / CDC 0568-73)</name>
    <dbReference type="NCBI Taxonomy" id="585054"/>
    <lineage>
        <taxon>Bacteria</taxon>
        <taxon>Pseudomonadati</taxon>
        <taxon>Pseudomonadota</taxon>
        <taxon>Gammaproteobacteria</taxon>
        <taxon>Enterobacterales</taxon>
        <taxon>Enterobacteriaceae</taxon>
        <taxon>Escherichia</taxon>
    </lineage>
</organism>
<comment type="function">
    <text evidence="1">Confers resistance to chloramphenicol.</text>
</comment>
<comment type="subcellular location">
    <subcellularLocation>
        <location evidence="1">Cell inner membrane</location>
        <topology evidence="1">Multi-pass membrane protein</topology>
    </subcellularLocation>
</comment>
<comment type="similarity">
    <text evidence="1">Belongs to the major facilitator superfamily. DHA1 family. MdtL (TC 2.A.1.2.22) subfamily.</text>
</comment>
<keyword id="KW-0046">Antibiotic resistance</keyword>
<keyword id="KW-0997">Cell inner membrane</keyword>
<keyword id="KW-1003">Cell membrane</keyword>
<keyword id="KW-0472">Membrane</keyword>
<keyword id="KW-0812">Transmembrane</keyword>
<keyword id="KW-1133">Transmembrane helix</keyword>
<keyword id="KW-0813">Transport</keyword>
<feature type="chain" id="PRO_1000200824" description="Multidrug resistance protein MdtL">
    <location>
        <begin position="1"/>
        <end position="391"/>
    </location>
</feature>
<feature type="transmembrane region" description="Helical" evidence="1">
    <location>
        <begin position="4"/>
        <end position="24"/>
    </location>
</feature>
<feature type="transmembrane region" description="Helical" evidence="1">
    <location>
        <begin position="42"/>
        <end position="62"/>
    </location>
</feature>
<feature type="transmembrane region" description="Helical" evidence="1">
    <location>
        <begin position="69"/>
        <end position="89"/>
    </location>
</feature>
<feature type="transmembrane region" description="Helical" evidence="1">
    <location>
        <begin position="93"/>
        <end position="113"/>
    </location>
</feature>
<feature type="transmembrane region" description="Helical" evidence="1">
    <location>
        <begin position="131"/>
        <end position="151"/>
    </location>
</feature>
<feature type="transmembrane region" description="Helical" evidence="1">
    <location>
        <begin position="158"/>
        <end position="178"/>
    </location>
</feature>
<feature type="transmembrane region" description="Helical" evidence="1">
    <location>
        <begin position="203"/>
        <end position="222"/>
    </location>
</feature>
<feature type="transmembrane region" description="Helical" evidence="1">
    <location>
        <begin position="245"/>
        <end position="265"/>
    </location>
</feature>
<feature type="transmembrane region" description="Helical" evidence="1">
    <location>
        <begin position="269"/>
        <end position="289"/>
    </location>
</feature>
<feature type="transmembrane region" description="Helical" evidence="1">
    <location>
        <begin position="293"/>
        <end position="313"/>
    </location>
</feature>
<feature type="transmembrane region" description="Helical" evidence="1">
    <location>
        <begin position="324"/>
        <end position="346"/>
    </location>
</feature>
<feature type="transmembrane region" description="Helical" evidence="1">
    <location>
        <begin position="363"/>
        <end position="383"/>
    </location>
</feature>
<gene>
    <name evidence="1" type="primary">mdtL</name>
    <name type="ordered locus">EFER_4006</name>
</gene>
<protein>
    <recommendedName>
        <fullName evidence="1">Multidrug resistance protein MdtL</fullName>
    </recommendedName>
</protein>
<accession>B7LK52</accession>
<proteinExistence type="inferred from homology"/>
<sequence length="391" mass="41587">MSRFLICSFALVLLYPAGIDMYLVGLPRIAADLNASEAQLHIAFSVYLAGMAAAMLFAGKVADRSGRKPVAIPGAALFIIASVFCSLAETSTLFLAGRFLQGLGAGCCYVVAFAILRDTLDDRRRAKVLSLLNGITCIIPVLAPVLGHLIMLKFPWQSLFWAMATMGIAVLMLSLFILKETRPAAPAASDKPRENRESLLNRFFLSRVVITTLSVSVILTFVNTSPVLLMEIMGFERGEYATIMALTAGVSMTVSFSTPFALGIFKPRTLMITSQVLFLAAGITLAVSPSHAISLFGITLICAGFSIGFGVAMSQALGPFSLRAGVASSTLGIAQVCGSSLWIWLAAVVGIGAWNMLIGILIACSIVSLLLIMFVTPGRPVAAHEEIHHHA</sequence>
<name>MDTL_ESCF3</name>